<protein>
    <recommendedName>
        <fullName>Microtubule-associated protein RP/EB family member 3</fullName>
    </recommendedName>
    <alternativeName>
        <fullName>EB1 protein family member 3</fullName>
        <shortName>EBF3</shortName>
    </alternativeName>
    <alternativeName>
        <fullName>End-binding protein 3</fullName>
        <shortName>EB3</shortName>
    </alternativeName>
    <alternativeName>
        <fullName>RP3</fullName>
    </alternativeName>
</protein>
<comment type="function">
    <text evidence="2">Plus-end tracking protein (+TIP) that binds to the plus-end of microtubules and regulates the dynamics of the microtubule cytoskeleton. Promotes microtubule growth. May be involved in spindle function by stabilizing microtubules and anchoring them at centrosomes. Also acts as a regulator of minus-end microtubule organization: interacts with the complex formed by AKAP9 and PDE4DIP, leading to recruit CAMSAP2 to the Golgi apparatus, thereby tethering non-centrosomal minus-end microtubules to the Golgi, an important step for polarized cell movement. Promotes elongation of CAMSAP2-decorated microtubule stretches on the minus-end of microtubules (By similarity).</text>
</comment>
<comment type="subunit">
    <text evidence="2 6 7">Homodimer (By similarity). Heterodimer with MAPRE1 (By similarity). Binds monomeric and polymerized GTP-bound tubulin. Interacts with DCTN1 and SRCIN1 (By similarity). Binds to the C-terminal domain of APC (By similarity). Interacts (via C-terminus) with CLIP1 (By similarity). Interacts with SLAIN2 (By similarity). Interacts with SLAIN1 (PubMed:21646404). Interacts with APC2 (PubMed:17310996). Interacts with AKAP9 (By similarity). Interacts with PDE4DIP isoform 2/MMG8/SMYLE; this interaction is required for its recruitment to the Golgi apparatus (By similarity).</text>
</comment>
<comment type="subcellular location">
    <subcellularLocation>
        <location evidence="8">Cytoplasm</location>
        <location evidence="8">Cytoskeleton</location>
    </subcellularLocation>
    <text evidence="8">Associated with the microtubule network. Detected at the plus end of microtubules.</text>
</comment>
<comment type="domain">
    <text evidence="2">Composed of two functionally independent domains. The N-terminal domain forms a hydrophobic cleft involved in microtubule binding and the C-terminal is involved in the formation of mutually exclusive complexes with APC and DCTN1.</text>
</comment>
<comment type="similarity">
    <text evidence="9">Belongs to the MAPRE family.</text>
</comment>
<name>MARE3_MOUSE</name>
<proteinExistence type="evidence at protein level"/>
<reference key="1">
    <citation type="journal article" date="2004" name="Genome Res.">
        <title>The status, quality, and expansion of the NIH full-length cDNA project: the Mammalian Gene Collection (MGC).</title>
        <authorList>
            <consortium name="The MGC Project Team"/>
        </authorList>
    </citation>
    <scope>NUCLEOTIDE SEQUENCE [LARGE SCALE MRNA]</scope>
    <source>
        <strain>FVB/N</strain>
        <tissue>Liver</tissue>
    </source>
</reference>
<reference key="2">
    <citation type="submission" date="1996-03" db="EMBL/GenBank/DDBJ databases">
        <authorList>
            <person name="Hoffman N.G."/>
            <person name="Kay B.K."/>
        </authorList>
    </citation>
    <scope>NUCLEOTIDE SEQUENCE [MRNA] OF 57-281</scope>
</reference>
<reference key="3">
    <citation type="journal article" date="2007" name="Oncogene">
        <title>p53 downstream target DDA3 is a novel microtubule-associated protein that interacts with end-binding protein EB3 and activates beta-catenin pathway.</title>
        <authorList>
            <person name="Hsieh P.-C."/>
            <person name="Chang J.-C."/>
            <person name="Sun W.-T."/>
            <person name="Hsieh S.-C."/>
            <person name="Wang M.-C."/>
            <person name="Wang F.-F."/>
        </authorList>
    </citation>
    <scope>INTERACTION WITH APC2</scope>
</reference>
<reference key="4">
    <citation type="journal article" date="2010" name="Cell">
        <title>A tissue-specific atlas of mouse protein phosphorylation and expression.</title>
        <authorList>
            <person name="Huttlin E.L."/>
            <person name="Jedrychowski M.P."/>
            <person name="Elias J.E."/>
            <person name="Goswami T."/>
            <person name="Rad R."/>
            <person name="Beausoleil S.A."/>
            <person name="Villen J."/>
            <person name="Haas W."/>
            <person name="Sowa M.E."/>
            <person name="Gygi S.P."/>
        </authorList>
    </citation>
    <scope>PHOSPHORYLATION [LARGE SCALE ANALYSIS] AT SER-162 AND SER-176</scope>
    <scope>IDENTIFICATION BY MASS SPECTROMETRY [LARGE SCALE ANALYSIS]</scope>
    <source>
        <tissue>Brain</tissue>
        <tissue>Brown adipose tissue</tissue>
        <tissue>Heart</tissue>
        <tissue>Kidney</tissue>
        <tissue>Liver</tissue>
        <tissue>Lung</tissue>
        <tissue>Spleen</tissue>
        <tissue>Testis</tissue>
    </source>
</reference>
<reference key="5">
    <citation type="journal article" date="2011" name="J. Cell Biol.">
        <title>SLAIN2 links microtubule plus end-tracking proteins and controls microtubule growth in interphase.</title>
        <authorList>
            <person name="van der Vaart B."/>
            <person name="Manatschal C."/>
            <person name="Grigoriev I."/>
            <person name="Olieric V."/>
            <person name="Gouveia S.M."/>
            <person name="Bjelic S."/>
            <person name="Demmers J."/>
            <person name="Vorobjev I."/>
            <person name="Hoogenraad C.C."/>
            <person name="Steinmetz M.O."/>
            <person name="Akhmanova A."/>
        </authorList>
    </citation>
    <scope>INTERACTION WITH SLAIN1</scope>
</reference>
<reference key="6">
    <citation type="journal article" date="2014" name="J. Cell Sci.">
        <title>GAS2-like proteins mediate communication between microtubules and actin through interactions with end-binding proteins.</title>
        <authorList>
            <person name="Stroud M.J."/>
            <person name="Nazgiewicz A."/>
            <person name="McKenzie E.A."/>
            <person name="Wang Y."/>
            <person name="Kammerer R.A."/>
            <person name="Ballestrem C."/>
        </authorList>
    </citation>
    <scope>SUBCELLULAR LOCATION</scope>
</reference>
<gene>
    <name type="primary">Mapre3</name>
</gene>
<evidence type="ECO:0000250" key="1"/>
<evidence type="ECO:0000250" key="2">
    <source>
        <dbReference type="UniProtKB" id="Q9UPY8"/>
    </source>
</evidence>
<evidence type="ECO:0000255" key="3">
    <source>
        <dbReference type="PROSITE-ProRule" id="PRU00044"/>
    </source>
</evidence>
<evidence type="ECO:0000255" key="4">
    <source>
        <dbReference type="PROSITE-ProRule" id="PRU00576"/>
    </source>
</evidence>
<evidence type="ECO:0000256" key="5">
    <source>
        <dbReference type="SAM" id="MobiDB-lite"/>
    </source>
</evidence>
<evidence type="ECO:0000269" key="6">
    <source>
    </source>
</evidence>
<evidence type="ECO:0000269" key="7">
    <source>
    </source>
</evidence>
<evidence type="ECO:0000269" key="8">
    <source>
    </source>
</evidence>
<evidence type="ECO:0000305" key="9"/>
<evidence type="ECO:0007744" key="10">
    <source>
    </source>
</evidence>
<sequence>MAVNVYSTSVTSENLSRHDMLAWVNDSLHLNYTKIEQLCSGAAYCQFMDMLFPGCVHLRKVKFQAKLEHEYIHNFKVLQAAFKKMGVDKIIPVEKLVKGKFQDNFEFIQWFKKFFDANYDGKDYNPLLARQGQDVAPPPNPGDQIFNKSKKLIGTAVPQRTSPTGPKNMQTSGRLSNVAPPCILRKNPPSARNGGHEADAQILELNQQLLDLKLTVDGLEKERDFYFSKLRDIELICQEHESENSPVISGIIGILYATEEGFAPPEDDEIEEHQQEDQDEY</sequence>
<dbReference type="EMBL" id="BC057918">
    <property type="protein sequence ID" value="AAH57918.1"/>
    <property type="molecule type" value="mRNA"/>
</dbReference>
<dbReference type="EMBL" id="U51204">
    <property type="protein sequence ID" value="AAA96321.1"/>
    <property type="molecule type" value="mRNA"/>
</dbReference>
<dbReference type="CCDS" id="CCDS19163.1"/>
<dbReference type="RefSeq" id="NP_001412672.1">
    <property type="nucleotide sequence ID" value="NM_001425743.1"/>
</dbReference>
<dbReference type="RefSeq" id="NP_579928.1">
    <property type="nucleotide sequence ID" value="NM_133350.3"/>
</dbReference>
<dbReference type="RefSeq" id="XP_006503686.1">
    <property type="nucleotide sequence ID" value="XM_006503623.3"/>
</dbReference>
<dbReference type="RefSeq" id="XP_030109882.1">
    <property type="nucleotide sequence ID" value="XM_030254022.2"/>
</dbReference>
<dbReference type="BMRB" id="Q6PER3"/>
<dbReference type="SMR" id="Q6PER3"/>
<dbReference type="BioGRID" id="221519">
    <property type="interactions" value="18"/>
</dbReference>
<dbReference type="FunCoup" id="Q6PER3">
    <property type="interactions" value="693"/>
</dbReference>
<dbReference type="IntAct" id="Q6PER3">
    <property type="interactions" value="3"/>
</dbReference>
<dbReference type="MINT" id="Q6PER3"/>
<dbReference type="STRING" id="10090.ENSMUSP00000031058"/>
<dbReference type="GlyGen" id="Q6PER3">
    <property type="glycosylation" value="1 site, 1 N-linked glycan (1 site)"/>
</dbReference>
<dbReference type="iPTMnet" id="Q6PER3"/>
<dbReference type="PhosphoSitePlus" id="Q6PER3"/>
<dbReference type="SwissPalm" id="Q6PER3"/>
<dbReference type="jPOST" id="Q6PER3"/>
<dbReference type="PaxDb" id="10090-ENSMUSP00000031058"/>
<dbReference type="ProteomicsDB" id="252731"/>
<dbReference type="Pumba" id="Q6PER3"/>
<dbReference type="Antibodypedia" id="1949">
    <property type="antibodies" value="273 antibodies from 37 providers"/>
</dbReference>
<dbReference type="DNASU" id="100732"/>
<dbReference type="Ensembl" id="ENSMUST00000031058.15">
    <property type="protein sequence ID" value="ENSMUSP00000031058.9"/>
    <property type="gene ID" value="ENSMUSG00000029166.15"/>
</dbReference>
<dbReference type="GeneID" id="100732"/>
<dbReference type="KEGG" id="mmu:100732"/>
<dbReference type="UCSC" id="uc008wvz.1">
    <property type="organism name" value="mouse"/>
</dbReference>
<dbReference type="AGR" id="MGI:2140967"/>
<dbReference type="CTD" id="22924"/>
<dbReference type="MGI" id="MGI:2140967">
    <property type="gene designation" value="Mapre3"/>
</dbReference>
<dbReference type="VEuPathDB" id="HostDB:ENSMUSG00000029166"/>
<dbReference type="eggNOG" id="KOG3000">
    <property type="taxonomic scope" value="Eukaryota"/>
</dbReference>
<dbReference type="GeneTree" id="ENSGT00490000043329"/>
<dbReference type="InParanoid" id="Q6PER3"/>
<dbReference type="OMA" id="HTHWIKH"/>
<dbReference type="OrthoDB" id="2119228at2759"/>
<dbReference type="PhylomeDB" id="Q6PER3"/>
<dbReference type="TreeFam" id="TF313620"/>
<dbReference type="BioGRID-ORCS" id="100732">
    <property type="hits" value="4 hits in 78 CRISPR screens"/>
</dbReference>
<dbReference type="CD-CODE" id="CE726F99">
    <property type="entry name" value="Postsynaptic density"/>
</dbReference>
<dbReference type="ChiTaRS" id="Mapre3">
    <property type="organism name" value="mouse"/>
</dbReference>
<dbReference type="PRO" id="PR:Q6PER3"/>
<dbReference type="Proteomes" id="UP000000589">
    <property type="component" value="Chromosome 5"/>
</dbReference>
<dbReference type="RNAct" id="Q6PER3">
    <property type="molecule type" value="protein"/>
</dbReference>
<dbReference type="Bgee" id="ENSMUSG00000029166">
    <property type="expression patterns" value="Expressed in retinal neural layer and 188 other cell types or tissues"/>
</dbReference>
<dbReference type="ExpressionAtlas" id="Q6PER3">
    <property type="expression patterns" value="baseline and differential"/>
</dbReference>
<dbReference type="GO" id="GO:0005737">
    <property type="term" value="C:cytoplasm"/>
    <property type="evidence" value="ECO:0000314"/>
    <property type="project" value="BHF-UCL"/>
</dbReference>
<dbReference type="GO" id="GO:0015630">
    <property type="term" value="C:microtubule cytoskeleton"/>
    <property type="evidence" value="ECO:0000314"/>
    <property type="project" value="BHF-UCL"/>
</dbReference>
<dbReference type="GO" id="GO:0035371">
    <property type="term" value="C:microtubule plus-end"/>
    <property type="evidence" value="ECO:0000314"/>
    <property type="project" value="MGI"/>
</dbReference>
<dbReference type="GO" id="GO:0030496">
    <property type="term" value="C:midbody"/>
    <property type="evidence" value="ECO:0000314"/>
    <property type="project" value="BHF-UCL"/>
</dbReference>
<dbReference type="GO" id="GO:1905721">
    <property type="term" value="C:mitotic spindle astral microtubule end"/>
    <property type="evidence" value="ECO:0007669"/>
    <property type="project" value="Ensembl"/>
</dbReference>
<dbReference type="GO" id="GO:0042802">
    <property type="term" value="F:identical protein binding"/>
    <property type="evidence" value="ECO:0007669"/>
    <property type="project" value="Ensembl"/>
</dbReference>
<dbReference type="GO" id="GO:0008017">
    <property type="term" value="F:microtubule binding"/>
    <property type="evidence" value="ECO:0000314"/>
    <property type="project" value="BHF-UCL"/>
</dbReference>
<dbReference type="GO" id="GO:0051010">
    <property type="term" value="F:microtubule plus-end binding"/>
    <property type="evidence" value="ECO:0000314"/>
    <property type="project" value="MGI"/>
</dbReference>
<dbReference type="GO" id="GO:0043539">
    <property type="term" value="F:protein serine/threonine kinase activator activity"/>
    <property type="evidence" value="ECO:0007669"/>
    <property type="project" value="Ensembl"/>
</dbReference>
<dbReference type="GO" id="GO:0120283">
    <property type="term" value="F:protein serine/threonine kinase binding"/>
    <property type="evidence" value="ECO:0007669"/>
    <property type="project" value="Ensembl"/>
</dbReference>
<dbReference type="GO" id="GO:0051301">
    <property type="term" value="P:cell division"/>
    <property type="evidence" value="ECO:0007669"/>
    <property type="project" value="UniProtKB-KW"/>
</dbReference>
<dbReference type="GO" id="GO:0045893">
    <property type="term" value="P:positive regulation of DNA-templated transcription"/>
    <property type="evidence" value="ECO:0000315"/>
    <property type="project" value="BHF-UCL"/>
</dbReference>
<dbReference type="GO" id="GO:0031113">
    <property type="term" value="P:regulation of microtubule polymerization"/>
    <property type="evidence" value="ECO:0007669"/>
    <property type="project" value="Ensembl"/>
</dbReference>
<dbReference type="FunFam" id="1.20.5.1430:FF:000003">
    <property type="entry name" value="microtubule-associated protein RP/EB family member 3 isoform X1"/>
    <property type="match status" value="1"/>
</dbReference>
<dbReference type="FunFam" id="1.10.418.10:FF:000007">
    <property type="entry name" value="Microtubule-associated protein, RP/EB family, member 2"/>
    <property type="match status" value="1"/>
</dbReference>
<dbReference type="Gene3D" id="1.20.5.1430">
    <property type="match status" value="1"/>
</dbReference>
<dbReference type="Gene3D" id="1.10.418.10">
    <property type="entry name" value="Calponin-like domain"/>
    <property type="match status" value="1"/>
</dbReference>
<dbReference type="InterPro" id="IPR001715">
    <property type="entry name" value="CH_dom"/>
</dbReference>
<dbReference type="InterPro" id="IPR036872">
    <property type="entry name" value="CH_dom_sf"/>
</dbReference>
<dbReference type="InterPro" id="IPR004953">
    <property type="entry name" value="EB1_C"/>
</dbReference>
<dbReference type="InterPro" id="IPR036133">
    <property type="entry name" value="EB1_C_sf"/>
</dbReference>
<dbReference type="InterPro" id="IPR027328">
    <property type="entry name" value="MAPRE"/>
</dbReference>
<dbReference type="PANTHER" id="PTHR10623">
    <property type="entry name" value="MICROTUBULE-ASSOCIATED PROTEIN RP/EB FAMILY MEMBER"/>
    <property type="match status" value="1"/>
</dbReference>
<dbReference type="Pfam" id="PF00307">
    <property type="entry name" value="CH"/>
    <property type="match status" value="1"/>
</dbReference>
<dbReference type="Pfam" id="PF03271">
    <property type="entry name" value="EB1"/>
    <property type="match status" value="1"/>
</dbReference>
<dbReference type="SUPFAM" id="SSF47576">
    <property type="entry name" value="Calponin-homology domain, CH-domain"/>
    <property type="match status" value="1"/>
</dbReference>
<dbReference type="SUPFAM" id="SSF140612">
    <property type="entry name" value="EB1 dimerisation domain-like"/>
    <property type="match status" value="1"/>
</dbReference>
<dbReference type="PROSITE" id="PS50021">
    <property type="entry name" value="CH"/>
    <property type="match status" value="1"/>
</dbReference>
<dbReference type="PROSITE" id="PS51230">
    <property type="entry name" value="EB1_C"/>
    <property type="match status" value="1"/>
</dbReference>
<organism>
    <name type="scientific">Mus musculus</name>
    <name type="common">Mouse</name>
    <dbReference type="NCBI Taxonomy" id="10090"/>
    <lineage>
        <taxon>Eukaryota</taxon>
        <taxon>Metazoa</taxon>
        <taxon>Chordata</taxon>
        <taxon>Craniata</taxon>
        <taxon>Vertebrata</taxon>
        <taxon>Euteleostomi</taxon>
        <taxon>Mammalia</taxon>
        <taxon>Eutheria</taxon>
        <taxon>Euarchontoglires</taxon>
        <taxon>Glires</taxon>
        <taxon>Rodentia</taxon>
        <taxon>Myomorpha</taxon>
        <taxon>Muroidea</taxon>
        <taxon>Muridae</taxon>
        <taxon>Murinae</taxon>
        <taxon>Mus</taxon>
        <taxon>Mus</taxon>
    </lineage>
</organism>
<accession>Q6PER3</accession>
<accession>Q61167</accession>
<keyword id="KW-0131">Cell cycle</keyword>
<keyword id="KW-0132">Cell division</keyword>
<keyword id="KW-0963">Cytoplasm</keyword>
<keyword id="KW-0206">Cytoskeleton</keyword>
<keyword id="KW-0493">Microtubule</keyword>
<keyword id="KW-0498">Mitosis</keyword>
<keyword id="KW-0597">Phosphoprotein</keyword>
<keyword id="KW-1185">Reference proteome</keyword>
<feature type="chain" id="PRO_0000213429" description="Microtubule-associated protein RP/EB family member 3">
    <location>
        <begin position="1"/>
        <end position="281"/>
    </location>
</feature>
<feature type="domain" description="Calponin-homology (CH)" evidence="3">
    <location>
        <begin position="14"/>
        <end position="116"/>
    </location>
</feature>
<feature type="domain" description="EB1 C-terminal" evidence="4">
    <location>
        <begin position="194"/>
        <end position="264"/>
    </location>
</feature>
<feature type="region of interest" description="Disordered" evidence="5">
    <location>
        <begin position="157"/>
        <end position="181"/>
    </location>
</feature>
<feature type="region of interest" description="DCTN1-binding" evidence="1">
    <location>
        <begin position="217"/>
        <end position="281"/>
    </location>
</feature>
<feature type="region of interest" description="APC-binding" evidence="1">
    <location>
        <begin position="217"/>
        <end position="260"/>
    </location>
</feature>
<feature type="region of interest" description="Disordered" evidence="5">
    <location>
        <begin position="260"/>
        <end position="281"/>
    </location>
</feature>
<feature type="compositionally biased region" description="Polar residues" evidence="5">
    <location>
        <begin position="158"/>
        <end position="175"/>
    </location>
</feature>
<feature type="compositionally biased region" description="Basic and acidic residues" evidence="5">
    <location>
        <begin position="272"/>
        <end position="281"/>
    </location>
</feature>
<feature type="modified residue" description="Phosphoserine" evidence="10">
    <location>
        <position position="162"/>
    </location>
</feature>
<feature type="modified residue" description="Phosphoserine" evidence="10">
    <location>
        <position position="176"/>
    </location>
</feature>